<organism>
    <name type="scientific">Homo sapiens</name>
    <name type="common">Human</name>
    <dbReference type="NCBI Taxonomy" id="9606"/>
    <lineage>
        <taxon>Eukaryota</taxon>
        <taxon>Metazoa</taxon>
        <taxon>Chordata</taxon>
        <taxon>Craniata</taxon>
        <taxon>Vertebrata</taxon>
        <taxon>Euteleostomi</taxon>
        <taxon>Mammalia</taxon>
        <taxon>Eutheria</taxon>
        <taxon>Euarchontoglires</taxon>
        <taxon>Primates</taxon>
        <taxon>Haplorrhini</taxon>
        <taxon>Catarrhini</taxon>
        <taxon>Hominidae</taxon>
        <taxon>Homo</taxon>
    </lineage>
</organism>
<dbReference type="EC" id="3.1.3.-"/>
<dbReference type="EMBL" id="AJ277557">
    <property type="protein sequence ID" value="CAB99251.1"/>
    <property type="molecule type" value="Genomic_DNA"/>
</dbReference>
<dbReference type="EMBL" id="AF210652">
    <property type="protein sequence ID" value="AAF87076.1"/>
    <property type="molecule type" value="mRNA"/>
</dbReference>
<dbReference type="EMBL" id="BC035838">
    <property type="protein sequence ID" value="AAH35838.1"/>
    <property type="molecule type" value="mRNA"/>
</dbReference>
<dbReference type="CCDS" id="CCDS32581.1"/>
<dbReference type="RefSeq" id="NP_064586.1">
    <property type="nucleotide sequence ID" value="NM_020201.4"/>
</dbReference>
<dbReference type="PDB" id="1MH9">
    <property type="method" value="X-ray"/>
    <property type="resolution" value="1.80 A"/>
    <property type="chains" value="A=32-228"/>
</dbReference>
<dbReference type="PDB" id="1Q91">
    <property type="method" value="X-ray"/>
    <property type="resolution" value="1.60 A"/>
    <property type="chains" value="A=32-228"/>
</dbReference>
<dbReference type="PDB" id="1Q92">
    <property type="method" value="X-ray"/>
    <property type="resolution" value="1.40 A"/>
    <property type="chains" value="A=32-228"/>
</dbReference>
<dbReference type="PDB" id="1Z4I">
    <property type="method" value="X-ray"/>
    <property type="resolution" value="1.98 A"/>
    <property type="chains" value="A=32-228"/>
</dbReference>
<dbReference type="PDB" id="1Z4J">
    <property type="method" value="X-ray"/>
    <property type="resolution" value="1.80 A"/>
    <property type="chains" value="A=32-228"/>
</dbReference>
<dbReference type="PDB" id="1Z4K">
    <property type="method" value="X-ray"/>
    <property type="resolution" value="1.75 A"/>
    <property type="chains" value="A=32-228"/>
</dbReference>
<dbReference type="PDB" id="1Z4L">
    <property type="method" value="X-ray"/>
    <property type="resolution" value="1.80 A"/>
    <property type="chains" value="A=32-228"/>
</dbReference>
<dbReference type="PDB" id="1Z4M">
    <property type="method" value="X-ray"/>
    <property type="resolution" value="1.70 A"/>
    <property type="chains" value="A=32-228"/>
</dbReference>
<dbReference type="PDB" id="1Z4P">
    <property type="method" value="X-ray"/>
    <property type="resolution" value="2.00 A"/>
    <property type="chains" value="X=32-228"/>
</dbReference>
<dbReference type="PDB" id="1Z4Q">
    <property type="method" value="X-ray"/>
    <property type="resolution" value="2.05 A"/>
    <property type="chains" value="A=32-228"/>
</dbReference>
<dbReference type="PDB" id="2JAU">
    <property type="method" value="X-ray"/>
    <property type="resolution" value="1.80 A"/>
    <property type="chains" value="A=32-228"/>
</dbReference>
<dbReference type="PDB" id="2JAW">
    <property type="method" value="X-ray"/>
    <property type="resolution" value="1.95 A"/>
    <property type="chains" value="A=32-228"/>
</dbReference>
<dbReference type="PDB" id="4L6A">
    <property type="method" value="X-ray"/>
    <property type="resolution" value="1.40 A"/>
    <property type="chains" value="A=32-228"/>
</dbReference>
<dbReference type="PDB" id="4L6C">
    <property type="method" value="X-ray"/>
    <property type="resolution" value="1.80 A"/>
    <property type="chains" value="A=32-228"/>
</dbReference>
<dbReference type="PDB" id="4MUM">
    <property type="method" value="X-ray"/>
    <property type="resolution" value="1.27 A"/>
    <property type="chains" value="A=32-227"/>
</dbReference>
<dbReference type="PDB" id="4MWO">
    <property type="method" value="X-ray"/>
    <property type="resolution" value="1.67 A"/>
    <property type="chains" value="A=32-227"/>
</dbReference>
<dbReference type="PDB" id="4NFL">
    <property type="method" value="X-ray"/>
    <property type="resolution" value="1.38 A"/>
    <property type="chains" value="A=32-227"/>
</dbReference>
<dbReference type="PDB" id="4YIK">
    <property type="method" value="X-ray"/>
    <property type="resolution" value="1.48 A"/>
    <property type="chains" value="A=32-227"/>
</dbReference>
<dbReference type="PDB" id="6G22">
    <property type="method" value="X-ray"/>
    <property type="resolution" value="1.85 A"/>
    <property type="chains" value="A=32-228"/>
</dbReference>
<dbReference type="PDB" id="6G2L">
    <property type="method" value="X-ray"/>
    <property type="resolution" value="1.48 A"/>
    <property type="chains" value="A=32-228"/>
</dbReference>
<dbReference type="PDB" id="6G2M">
    <property type="method" value="X-ray"/>
    <property type="resolution" value="1.37 A"/>
    <property type="chains" value="A=32-228"/>
</dbReference>
<dbReference type="PDBsum" id="1MH9"/>
<dbReference type="PDBsum" id="1Q91"/>
<dbReference type="PDBsum" id="1Q92"/>
<dbReference type="PDBsum" id="1Z4I"/>
<dbReference type="PDBsum" id="1Z4J"/>
<dbReference type="PDBsum" id="1Z4K"/>
<dbReference type="PDBsum" id="1Z4L"/>
<dbReference type="PDBsum" id="1Z4M"/>
<dbReference type="PDBsum" id="1Z4P"/>
<dbReference type="PDBsum" id="1Z4Q"/>
<dbReference type="PDBsum" id="2JAU"/>
<dbReference type="PDBsum" id="2JAW"/>
<dbReference type="PDBsum" id="4L6A"/>
<dbReference type="PDBsum" id="4L6C"/>
<dbReference type="PDBsum" id="4MUM"/>
<dbReference type="PDBsum" id="4MWO"/>
<dbReference type="PDBsum" id="4NFL"/>
<dbReference type="PDBsum" id="4YIK"/>
<dbReference type="PDBsum" id="6G22"/>
<dbReference type="PDBsum" id="6G2L"/>
<dbReference type="PDBsum" id="6G2M"/>
<dbReference type="SMR" id="Q9NPB1"/>
<dbReference type="BioGRID" id="121277">
    <property type="interactions" value="9"/>
</dbReference>
<dbReference type="FunCoup" id="Q9NPB1">
    <property type="interactions" value="516"/>
</dbReference>
<dbReference type="IntAct" id="Q9NPB1">
    <property type="interactions" value="1"/>
</dbReference>
<dbReference type="STRING" id="9606.ENSP00000373674"/>
<dbReference type="ChEMBL" id="CHEMBL3751654"/>
<dbReference type="DrugBank" id="DB04672">
    <property type="generic name" value="Cyclic 3',5'-thymidine monophosphate"/>
</dbReference>
<dbReference type="DrugBank" id="DB02217">
    <property type="generic name" value="Dpb-T"/>
</dbReference>
<dbReference type="DEPOD" id="NT5M"/>
<dbReference type="GlyGen" id="Q9NPB1">
    <property type="glycosylation" value="1 site"/>
</dbReference>
<dbReference type="iPTMnet" id="Q9NPB1"/>
<dbReference type="PhosphoSitePlus" id="Q9NPB1"/>
<dbReference type="BioMuta" id="NT5M"/>
<dbReference type="DMDM" id="38258255"/>
<dbReference type="MassIVE" id="Q9NPB1"/>
<dbReference type="PaxDb" id="9606-ENSP00000373674"/>
<dbReference type="PeptideAtlas" id="Q9NPB1"/>
<dbReference type="Antibodypedia" id="25442">
    <property type="antibodies" value="90 antibodies from 19 providers"/>
</dbReference>
<dbReference type="DNASU" id="56953"/>
<dbReference type="Ensembl" id="ENST00000389022.9">
    <property type="protein sequence ID" value="ENSP00000373674.4"/>
    <property type="gene ID" value="ENSG00000205309.14"/>
</dbReference>
<dbReference type="GeneID" id="56953"/>
<dbReference type="KEGG" id="hsa:56953"/>
<dbReference type="MANE-Select" id="ENST00000389022.9">
    <property type="protein sequence ID" value="ENSP00000373674.4"/>
    <property type="RefSeq nucleotide sequence ID" value="NM_020201.4"/>
    <property type="RefSeq protein sequence ID" value="NP_064586.1"/>
</dbReference>
<dbReference type="UCSC" id="uc002grf.4">
    <property type="organism name" value="human"/>
</dbReference>
<dbReference type="AGR" id="HGNC:15769"/>
<dbReference type="CTD" id="56953"/>
<dbReference type="DisGeNET" id="56953"/>
<dbReference type="GeneCards" id="NT5M"/>
<dbReference type="HGNC" id="HGNC:15769">
    <property type="gene designation" value="NT5M"/>
</dbReference>
<dbReference type="HPA" id="ENSG00000205309">
    <property type="expression patterns" value="Tissue enhanced (brain, skeletal muscle)"/>
</dbReference>
<dbReference type="MIM" id="605292">
    <property type="type" value="gene"/>
</dbReference>
<dbReference type="neXtProt" id="NX_Q9NPB1"/>
<dbReference type="OpenTargets" id="ENSG00000205309"/>
<dbReference type="PharmGKB" id="PA31805"/>
<dbReference type="VEuPathDB" id="HostDB:ENSG00000205309"/>
<dbReference type="eggNOG" id="ENOG502QPWJ">
    <property type="taxonomic scope" value="Eukaryota"/>
</dbReference>
<dbReference type="GeneTree" id="ENSGT00390000011596"/>
<dbReference type="HOGENOM" id="CLU_100259_0_0_1"/>
<dbReference type="InParanoid" id="Q9NPB1"/>
<dbReference type="OrthoDB" id="9476748at2759"/>
<dbReference type="PAN-GO" id="Q9NPB1">
    <property type="GO annotations" value="2 GO annotations based on evolutionary models"/>
</dbReference>
<dbReference type="PhylomeDB" id="Q9NPB1"/>
<dbReference type="TreeFam" id="TF331117"/>
<dbReference type="PathwayCommons" id="Q9NPB1"/>
<dbReference type="Reactome" id="R-HSA-73621">
    <property type="pathway name" value="Pyrimidine catabolism"/>
</dbReference>
<dbReference type="SABIO-RK" id="Q9NPB1"/>
<dbReference type="SignaLink" id="Q9NPB1"/>
<dbReference type="BioGRID-ORCS" id="56953">
    <property type="hits" value="17 hits in 1172 CRISPR screens"/>
</dbReference>
<dbReference type="EvolutionaryTrace" id="Q9NPB1"/>
<dbReference type="GenomeRNAi" id="56953"/>
<dbReference type="Pharos" id="Q9NPB1">
    <property type="development level" value="Tchem"/>
</dbReference>
<dbReference type="PRO" id="PR:Q9NPB1"/>
<dbReference type="Proteomes" id="UP000005640">
    <property type="component" value="Chromosome 17"/>
</dbReference>
<dbReference type="RNAct" id="Q9NPB1">
    <property type="molecule type" value="protein"/>
</dbReference>
<dbReference type="Bgee" id="ENSG00000205309">
    <property type="expression patterns" value="Expressed in monocyte and 101 other cell types or tissues"/>
</dbReference>
<dbReference type="ExpressionAtlas" id="Q9NPB1">
    <property type="expression patterns" value="baseline and differential"/>
</dbReference>
<dbReference type="GO" id="GO:0005759">
    <property type="term" value="C:mitochondrial matrix"/>
    <property type="evidence" value="ECO:0000304"/>
    <property type="project" value="Reactome"/>
</dbReference>
<dbReference type="GO" id="GO:0005739">
    <property type="term" value="C:mitochondrion"/>
    <property type="evidence" value="ECO:0006056"/>
    <property type="project" value="FlyBase"/>
</dbReference>
<dbReference type="GO" id="GO:0008253">
    <property type="term" value="F:5'-nucleotidase activity"/>
    <property type="evidence" value="ECO:0000318"/>
    <property type="project" value="GO_Central"/>
</dbReference>
<dbReference type="GO" id="GO:0046872">
    <property type="term" value="F:metal ion binding"/>
    <property type="evidence" value="ECO:0007669"/>
    <property type="project" value="UniProtKB-KW"/>
</dbReference>
<dbReference type="GO" id="GO:0008252">
    <property type="term" value="F:nucleotidase activity"/>
    <property type="evidence" value="ECO:0000304"/>
    <property type="project" value="ProtInc"/>
</dbReference>
<dbReference type="GO" id="GO:0000166">
    <property type="term" value="F:nucleotide binding"/>
    <property type="evidence" value="ECO:0007669"/>
    <property type="project" value="UniProtKB-KW"/>
</dbReference>
<dbReference type="GO" id="GO:0006260">
    <property type="term" value="P:DNA replication"/>
    <property type="evidence" value="ECO:0000304"/>
    <property type="project" value="ProtInc"/>
</dbReference>
<dbReference type="GO" id="GO:0046079">
    <property type="term" value="P:dUMP catabolic process"/>
    <property type="evidence" value="ECO:0007669"/>
    <property type="project" value="Ensembl"/>
</dbReference>
<dbReference type="GO" id="GO:0009223">
    <property type="term" value="P:pyrimidine deoxyribonucleotide catabolic process"/>
    <property type="evidence" value="ECO:0000318"/>
    <property type="project" value="GO_Central"/>
</dbReference>
<dbReference type="CDD" id="cd02587">
    <property type="entry name" value="HAD_5-3dNT"/>
    <property type="match status" value="1"/>
</dbReference>
<dbReference type="FunFam" id="1.10.40.40:FF:000001">
    <property type="entry name" value="5'(3')-deoxyribonucleotidase, cytosolic type"/>
    <property type="match status" value="1"/>
</dbReference>
<dbReference type="FunFam" id="3.40.50.1000:FF:000133">
    <property type="entry name" value="5'(3')-deoxyribonucleotidase, cytosolic type"/>
    <property type="match status" value="1"/>
</dbReference>
<dbReference type="Gene3D" id="1.10.40.40">
    <property type="entry name" value="Deoxyribonucleotidase, domain 2"/>
    <property type="match status" value="1"/>
</dbReference>
<dbReference type="Gene3D" id="3.40.50.1000">
    <property type="entry name" value="HAD superfamily/HAD-like"/>
    <property type="match status" value="1"/>
</dbReference>
<dbReference type="InterPro" id="IPR010708">
    <property type="entry name" value="5'(3')-deoxyribonucleotidase"/>
</dbReference>
<dbReference type="InterPro" id="IPR036412">
    <property type="entry name" value="HAD-like_sf"/>
</dbReference>
<dbReference type="InterPro" id="IPR023214">
    <property type="entry name" value="HAD_sf"/>
</dbReference>
<dbReference type="PANTHER" id="PTHR16504">
    <property type="entry name" value="5'(3')-DEOXYRIBONUCLEOTIDASE"/>
    <property type="match status" value="1"/>
</dbReference>
<dbReference type="PANTHER" id="PTHR16504:SF6">
    <property type="entry name" value="5'(3')-DEOXYRIBONUCLEOTIDASE, MITOCHONDRIAL"/>
    <property type="match status" value="1"/>
</dbReference>
<dbReference type="Pfam" id="PF06941">
    <property type="entry name" value="NT5C"/>
    <property type="match status" value="1"/>
</dbReference>
<dbReference type="SFLD" id="SFLDG01145">
    <property type="entry name" value="C1.2.1"/>
    <property type="match status" value="1"/>
</dbReference>
<dbReference type="SFLD" id="SFLDG01126">
    <property type="entry name" value="C1.2:_Nucleotidase_Like"/>
    <property type="match status" value="1"/>
</dbReference>
<dbReference type="SUPFAM" id="SSF56784">
    <property type="entry name" value="HAD-like"/>
    <property type="match status" value="1"/>
</dbReference>
<accession>Q9NPB1</accession>
<proteinExistence type="evidence at protein level"/>
<keyword id="KW-0002">3D-structure</keyword>
<keyword id="KW-0378">Hydrolase</keyword>
<keyword id="KW-0460">Magnesium</keyword>
<keyword id="KW-0479">Metal-binding</keyword>
<keyword id="KW-0496">Mitochondrion</keyword>
<keyword id="KW-0546">Nucleotide metabolism</keyword>
<keyword id="KW-0547">Nucleotide-binding</keyword>
<keyword id="KW-1267">Proteomics identification</keyword>
<keyword id="KW-1185">Reference proteome</keyword>
<keyword id="KW-0809">Transit peptide</keyword>
<evidence type="ECO:0000255" key="1"/>
<evidence type="ECO:0000269" key="2">
    <source>
    </source>
</evidence>
<evidence type="ECO:0000269" key="3">
    <source>
    </source>
</evidence>
<evidence type="ECO:0000305" key="4"/>
<evidence type="ECO:0000305" key="5">
    <source>
    </source>
</evidence>
<evidence type="ECO:0007829" key="6">
    <source>
        <dbReference type="PDB" id="4MUM"/>
    </source>
</evidence>
<evidence type="ECO:0007829" key="7">
    <source>
        <dbReference type="PDB" id="6G2M"/>
    </source>
</evidence>
<feature type="transit peptide" description="Mitochondrion" evidence="1">
    <location>
        <begin position="1"/>
        <end position="31"/>
    </location>
</feature>
<feature type="chain" id="PRO_0000000011" description="5'(3')-deoxyribonucleotidase, mitochondrial">
    <location>
        <begin position="32"/>
        <end position="228"/>
    </location>
</feature>
<feature type="active site" description="Nucleophile">
    <location>
        <position position="41"/>
    </location>
</feature>
<feature type="active site" description="Proton donor" evidence="4">
    <location>
        <position position="43"/>
    </location>
</feature>
<feature type="binding site" evidence="3">
    <location>
        <position position="41"/>
    </location>
    <ligand>
        <name>Mg(2+)</name>
        <dbReference type="ChEBI" id="CHEBI:18420"/>
    </ligand>
</feature>
<feature type="binding site" evidence="3">
    <location>
        <position position="43"/>
    </location>
    <ligand>
        <name>Mg(2+)</name>
        <dbReference type="ChEBI" id="CHEBI:18420"/>
    </ligand>
</feature>
<feature type="binding site">
    <location>
        <position position="43"/>
    </location>
    <ligand>
        <name>substrate</name>
    </ligand>
</feature>
<feature type="binding site">
    <location>
        <position position="49"/>
    </location>
    <ligand>
        <name>substrate</name>
    </ligand>
</feature>
<feature type="binding site">
    <location>
        <position position="75"/>
    </location>
    <ligand>
        <name>substrate</name>
    </ligand>
</feature>
<feature type="binding site">
    <location>
        <position position="76"/>
    </location>
    <ligand>
        <name>substrate</name>
    </ligand>
</feature>
<feature type="binding site">
    <location>
        <position position="77"/>
    </location>
    <ligand>
        <name>substrate</name>
    </ligand>
</feature>
<feature type="binding site">
    <location>
        <position position="96"/>
    </location>
    <ligand>
        <name>substrate</name>
    </ligand>
</feature>
<feature type="binding site">
    <location>
        <position position="130"/>
    </location>
    <ligand>
        <name>substrate</name>
    </ligand>
</feature>
<feature type="binding site">
    <location>
        <position position="165"/>
    </location>
    <ligand>
        <name>substrate</name>
    </ligand>
</feature>
<feature type="binding site" evidence="3">
    <location>
        <position position="176"/>
    </location>
    <ligand>
        <name>Mg(2+)</name>
        <dbReference type="ChEBI" id="CHEBI:18420"/>
    </ligand>
</feature>
<feature type="strand" evidence="6">
    <location>
        <begin position="36"/>
        <end position="40"/>
    </location>
</feature>
<feature type="turn" evidence="6">
    <location>
        <begin position="44"/>
        <end position="46"/>
    </location>
</feature>
<feature type="helix" evidence="6">
    <location>
        <begin position="49"/>
        <end position="60"/>
    </location>
</feature>
<feature type="helix" evidence="6">
    <location>
        <begin position="69"/>
        <end position="71"/>
    </location>
</feature>
<feature type="helix" evidence="6">
    <location>
        <begin position="77"/>
        <end position="84"/>
    </location>
</feature>
<feature type="helix" evidence="6">
    <location>
        <begin position="88"/>
        <end position="96"/>
    </location>
</feature>
<feature type="turn" evidence="6">
    <location>
        <begin position="99"/>
        <end position="104"/>
    </location>
</feature>
<feature type="helix" evidence="6">
    <location>
        <begin position="111"/>
        <end position="120"/>
    </location>
</feature>
<feature type="strand" evidence="6">
    <location>
        <begin position="124"/>
        <end position="130"/>
    </location>
</feature>
<feature type="turn" evidence="7">
    <location>
        <begin position="136"/>
        <end position="138"/>
    </location>
</feature>
<feature type="helix" evidence="6">
    <location>
        <begin position="139"/>
        <end position="151"/>
    </location>
</feature>
<feature type="helix" evidence="6">
    <location>
        <begin position="153"/>
        <end position="158"/>
    </location>
</feature>
<feature type="strand" evidence="6">
    <location>
        <begin position="159"/>
        <end position="161"/>
    </location>
</feature>
<feature type="helix" evidence="6">
    <location>
        <begin position="165"/>
        <end position="167"/>
    </location>
</feature>
<feature type="strand" evidence="6">
    <location>
        <begin position="171"/>
        <end position="176"/>
    </location>
</feature>
<feature type="strand" evidence="6">
    <location>
        <begin position="188"/>
        <end position="194"/>
    </location>
</feature>
<feature type="turn" evidence="6">
    <location>
        <begin position="197"/>
        <end position="201"/>
    </location>
</feature>
<feature type="strand" evidence="6">
    <location>
        <begin position="209"/>
        <end position="211"/>
    </location>
</feature>
<feature type="helix" evidence="6">
    <location>
        <begin position="218"/>
        <end position="223"/>
    </location>
</feature>
<gene>
    <name type="primary">NT5M</name>
    <name type="synonym">DNT2</name>
</gene>
<reference key="1">
    <citation type="journal article" date="2000" name="Proc. Natl. Acad. Sci. U.S.A.">
        <title>A deoxyribonucleotidase in mitochondria: involvement in regulation of dNTP pools and possible link to genetic disease.</title>
        <authorList>
            <person name="Rampazzo C."/>
            <person name="Gallinaro L."/>
            <person name="Milanesi E."/>
            <person name="Frigimelica E."/>
            <person name="Reichard P."/>
            <person name="Bianchi V."/>
        </authorList>
    </citation>
    <scope>NUCLEOTIDE SEQUENCE [GENOMIC DNA / MRNA]</scope>
    <scope>FUNCTION</scope>
    <scope>SUBCELLULAR LOCATION</scope>
    <scope>TISSUE SPECIFICITY</scope>
    <source>
        <tissue>Muscle</tissue>
    </source>
</reference>
<reference key="2">
    <citation type="journal article" date="2004" name="Genome Res.">
        <title>The status, quality, and expansion of the NIH full-length cDNA project: the Mammalian Gene Collection (MGC).</title>
        <authorList>
            <consortium name="The MGC Project Team"/>
        </authorList>
    </citation>
    <scope>NUCLEOTIDE SEQUENCE [LARGE SCALE MRNA]</scope>
    <source>
        <tissue>Hippocampus</tissue>
    </source>
</reference>
<reference key="3">
    <citation type="journal article" date="2002" name="Nat. Struct. Biol.">
        <title>Crystal structure of a human mitochondrial deoxyribonucleotidase.</title>
        <authorList>
            <person name="Rinaldo-Matthis A."/>
            <person name="Rampazzo C."/>
            <person name="Reichard P."/>
            <person name="Bianchi V."/>
            <person name="Nordlund P."/>
        </authorList>
    </citation>
    <scope>X-RAY CRYSTALLOGRAPHY (1.9 ANGSTROMS) OF 34-227 IN COMPLEX WITH MAGNESIUM AND A SUBSTRATE ANALOG</scope>
</reference>
<comment type="function">
    <text evidence="2">Dephosphorylates specifically the 5' and 2'(3')-phosphates of uracil and thymine deoxyribonucleotides, and so protects mitochondrial DNA replication from excess dTTP. Has only marginal activity towards dIMP and dGMP.</text>
</comment>
<comment type="cofactor">
    <cofactor>
        <name>Mg(2+)</name>
        <dbReference type="ChEBI" id="CHEBI:18420"/>
    </cofactor>
</comment>
<comment type="subunit">
    <text evidence="5">Homodimer.</text>
</comment>
<comment type="subcellular location">
    <subcellularLocation>
        <location evidence="2">Mitochondrion</location>
    </subcellularLocation>
</comment>
<comment type="tissue specificity">
    <text evidence="2">Highly expressed in heart, brain and skeletal muscle. Detected at very low levels in kidney and pancreas.</text>
</comment>
<comment type="similarity">
    <text evidence="4">Belongs to the 5'(3')-deoxyribonucleotidase family.</text>
</comment>
<protein>
    <recommendedName>
        <fullName>5'(3')-deoxyribonucleotidase, mitochondrial</fullName>
        <shortName>5',3'-nucleotidase, mitochondrial</shortName>
        <ecNumber>3.1.3.-</ecNumber>
    </recommendedName>
    <alternativeName>
        <fullName>Deoxy-5'-nucleotidase 2</fullName>
        <shortName>dNT-2</shortName>
    </alternativeName>
</protein>
<sequence>MIRLGGWCARRLCSAAVPAGRRGAAGGLGLAGGRALRVLVDMDGVLADFEGGFLRKFRARFPDQPFIALEDRRGFWVSEQYGRLRPGLSEKAISIWESKNFFFELEPLPGAVEAVKEMASLQNTDVFICTSPIKMFKYCPYEKYAWVEKYFGPDFLEQIVLTRDKTVVSADLLIDDRPDITGAEPTPSWEHVLFTACHNQHLQLQPPRRRLHSWADDWKAILDSKRPC</sequence>
<name>NT5M_HUMAN</name>